<protein>
    <recommendedName>
        <fullName>Serine/threonine-protein phosphatase 2A 55 kDa regulatory subunit B beta isoform</fullName>
    </recommendedName>
    <alternativeName>
        <fullName>PP2A subunit B isoform B55-beta</fullName>
    </alternativeName>
    <alternativeName>
        <fullName>PP2A subunit B isoform PR55-beta</fullName>
    </alternativeName>
    <alternativeName>
        <fullName>PP2A subunit B isoform R2-beta</fullName>
    </alternativeName>
    <alternativeName>
        <fullName>PP2A subunit B isoform beta</fullName>
    </alternativeName>
</protein>
<accession>B6VA23</accession>
<reference key="1">
    <citation type="submission" date="2008-10" db="EMBL/GenBank/DDBJ databases">
        <authorList>
            <person name="Zhao J.Q."/>
        </authorList>
    </citation>
    <scope>NUCLEOTIDE SEQUENCE [MRNA]</scope>
</reference>
<proteinExistence type="evidence at transcript level"/>
<comment type="function">
    <text evidence="1">The B regulatory subunit might modulate substrate selectivity and catalytic activity, and might also direct the localization of the catalytic enzyme to a particular subcellular compartment.</text>
</comment>
<comment type="subunit">
    <text evidence="1">PP2A consists of a common heterodimeric core enzyme, composed of a 36 kDa catalytic subunit (subunit C) and a 65 kDa constant regulatory subunit (PR65 or subunit A), that associates with a variety of regulatory subunits.</text>
</comment>
<comment type="subcellular location">
    <subcellularLocation>
        <location evidence="1">Cytoplasm</location>
    </subcellularLocation>
    <subcellularLocation>
        <location evidence="1">Cytoplasm</location>
        <location evidence="1">Cytoskeleton</location>
    </subcellularLocation>
    <subcellularLocation>
        <location evidence="1">Membrane</location>
    </subcellularLocation>
</comment>
<comment type="similarity">
    <text evidence="2">Belongs to the phosphatase 2A regulatory subunit B family.</text>
</comment>
<dbReference type="EMBL" id="FJ356012">
    <property type="protein sequence ID" value="ACJ04071.1"/>
    <property type="molecule type" value="mRNA"/>
</dbReference>
<dbReference type="SMR" id="B6VA23"/>
<dbReference type="Proteomes" id="UP000515129">
    <property type="component" value="Unplaced"/>
</dbReference>
<dbReference type="GO" id="GO:0005737">
    <property type="term" value="C:cytoplasm"/>
    <property type="evidence" value="ECO:0007669"/>
    <property type="project" value="UniProtKB-SubCell"/>
</dbReference>
<dbReference type="GO" id="GO:0005856">
    <property type="term" value="C:cytoskeleton"/>
    <property type="evidence" value="ECO:0007669"/>
    <property type="project" value="UniProtKB-SubCell"/>
</dbReference>
<dbReference type="GO" id="GO:0016020">
    <property type="term" value="C:membrane"/>
    <property type="evidence" value="ECO:0007669"/>
    <property type="project" value="UniProtKB-SubCell"/>
</dbReference>
<dbReference type="GO" id="GO:0000159">
    <property type="term" value="C:protein phosphatase type 2A complex"/>
    <property type="evidence" value="ECO:0007669"/>
    <property type="project" value="InterPro"/>
</dbReference>
<dbReference type="GO" id="GO:0019888">
    <property type="term" value="F:protein phosphatase regulator activity"/>
    <property type="evidence" value="ECO:0007669"/>
    <property type="project" value="InterPro"/>
</dbReference>
<dbReference type="FunFam" id="2.130.10.10:FF:000002">
    <property type="entry name" value="Serine/threonine-protein phosphatase 2A 55 kDa regulatory subunit B"/>
    <property type="match status" value="1"/>
</dbReference>
<dbReference type="Gene3D" id="2.130.10.10">
    <property type="entry name" value="YVTN repeat-like/Quinoprotein amine dehydrogenase"/>
    <property type="match status" value="1"/>
</dbReference>
<dbReference type="InterPro" id="IPR000009">
    <property type="entry name" value="PP2A_PR55"/>
</dbReference>
<dbReference type="InterPro" id="IPR018067">
    <property type="entry name" value="PP2A_PR55_CS"/>
</dbReference>
<dbReference type="InterPro" id="IPR015943">
    <property type="entry name" value="WD40/YVTN_repeat-like_dom_sf"/>
</dbReference>
<dbReference type="InterPro" id="IPR036322">
    <property type="entry name" value="WD40_repeat_dom_sf"/>
</dbReference>
<dbReference type="InterPro" id="IPR001680">
    <property type="entry name" value="WD40_rpt"/>
</dbReference>
<dbReference type="PANTHER" id="PTHR11871">
    <property type="entry name" value="PROTEIN PHOSPHATASE PP2A REGULATORY SUBUNIT B"/>
    <property type="match status" value="1"/>
</dbReference>
<dbReference type="Pfam" id="PF00400">
    <property type="entry name" value="WD40"/>
    <property type="match status" value="1"/>
</dbReference>
<dbReference type="PIRSF" id="PIRSF037309">
    <property type="entry name" value="PP2A_PR55"/>
    <property type="match status" value="1"/>
</dbReference>
<dbReference type="PRINTS" id="PR00600">
    <property type="entry name" value="PP2APR55"/>
</dbReference>
<dbReference type="SMART" id="SM00320">
    <property type="entry name" value="WD40"/>
    <property type="match status" value="7"/>
</dbReference>
<dbReference type="SUPFAM" id="SSF50978">
    <property type="entry name" value="WD40 repeat-like"/>
    <property type="match status" value="1"/>
</dbReference>
<dbReference type="PROSITE" id="PS01024">
    <property type="entry name" value="PR55_1"/>
    <property type="match status" value="1"/>
</dbReference>
<dbReference type="PROSITE" id="PS01025">
    <property type="entry name" value="PR55_2"/>
    <property type="match status" value="1"/>
</dbReference>
<dbReference type="PROSITE" id="PS00678">
    <property type="entry name" value="WD_REPEATS_1"/>
    <property type="match status" value="1"/>
</dbReference>
<feature type="chain" id="PRO_0000383348" description="Serine/threonine-protein phosphatase 2A 55 kDa regulatory subunit B beta isoform">
    <location>
        <begin position="1"/>
        <end position="443"/>
    </location>
</feature>
<feature type="repeat" description="WD 1">
    <location>
        <begin position="22"/>
        <end position="61"/>
    </location>
</feature>
<feature type="repeat" description="WD 2">
    <location>
        <begin position="87"/>
        <end position="128"/>
    </location>
</feature>
<feature type="repeat" description="WD 3">
    <location>
        <begin position="171"/>
        <end position="209"/>
    </location>
</feature>
<feature type="repeat" description="WD 4">
    <location>
        <begin position="220"/>
        <end position="260"/>
    </location>
</feature>
<feature type="repeat" description="WD 5">
    <location>
        <begin position="279"/>
        <end position="317"/>
    </location>
</feature>
<feature type="repeat" description="WD 6">
    <location>
        <begin position="334"/>
        <end position="375"/>
    </location>
</feature>
<feature type="repeat" description="WD 7">
    <location>
        <begin position="410"/>
        <end position="443"/>
    </location>
</feature>
<keyword id="KW-0963">Cytoplasm</keyword>
<keyword id="KW-0206">Cytoskeleton</keyword>
<keyword id="KW-0472">Membrane</keyword>
<keyword id="KW-1185">Reference proteome</keyword>
<keyword id="KW-0677">Repeat</keyword>
<keyword id="KW-0853">WD repeat</keyword>
<name>2ABB_CARAU</name>
<organism>
    <name type="scientific">Carassius auratus</name>
    <name type="common">Goldfish</name>
    <dbReference type="NCBI Taxonomy" id="7957"/>
    <lineage>
        <taxon>Eukaryota</taxon>
        <taxon>Metazoa</taxon>
        <taxon>Chordata</taxon>
        <taxon>Craniata</taxon>
        <taxon>Vertebrata</taxon>
        <taxon>Euteleostomi</taxon>
        <taxon>Actinopterygii</taxon>
        <taxon>Neopterygii</taxon>
        <taxon>Teleostei</taxon>
        <taxon>Ostariophysi</taxon>
        <taxon>Cypriniformes</taxon>
        <taxon>Cyprinidae</taxon>
        <taxon>Cyprininae</taxon>
        <taxon>Carassius</taxon>
    </lineage>
</organism>
<sequence length="443" mass="51658">MDEEIDTRKINNSFLRDHNYATEADIISTVEFNPTGELLATGDKGGRVVVFQREQESKSQPHRRGEYNVYSTFQSHEPEFDYLKSLEIEEKINKIRWLPRQNAAYFPLSTNDKTVKLWKISERDKRPEGYNLKDEEGRIRDPTTITTLRVPVLRPMDLMVEATPRRIFSNAHTYHINSISVNSDYETYMSTDDLRINLWNLEITNRSFNIVDIKPANMEELTEVITAAEFHPNQCNTFVYSSSKGSIRLCDMRTSALCDNHSKLFEEPEDPSNRSFFSEIISSISDVKFSHSGRYLMTRDYLTVKVWDINMESKPLETYQVHDYLRSKLCSLYENDCIFDKFECVWNGTDSVLMTGSYNNFFRMFDRNTKRDVTLEASRENSKPRAILKPRKVCIGGKRRKDEISVDSLDFSKKILHTAWHPNENIIAVAATNNLYIFQDKVN</sequence>
<evidence type="ECO:0000250" key="1"/>
<evidence type="ECO:0000305" key="2"/>
<gene>
    <name type="primary">ppp2r2b</name>
</gene>